<accession>Q8ZH34</accession>
<accession>Q0WHW7</accession>
<evidence type="ECO:0000255" key="1">
    <source>
        <dbReference type="HAMAP-Rule" id="MF_01119"/>
    </source>
</evidence>
<reference key="1">
    <citation type="journal article" date="2001" name="Nature">
        <title>Genome sequence of Yersinia pestis, the causative agent of plague.</title>
        <authorList>
            <person name="Parkhill J."/>
            <person name="Wren B.W."/>
            <person name="Thomson N.R."/>
            <person name="Titball R.W."/>
            <person name="Holden M.T.G."/>
            <person name="Prentice M.B."/>
            <person name="Sebaihia M."/>
            <person name="James K.D."/>
            <person name="Churcher C.M."/>
            <person name="Mungall K.L."/>
            <person name="Baker S."/>
            <person name="Basham D."/>
            <person name="Bentley S.D."/>
            <person name="Brooks K."/>
            <person name="Cerdeno-Tarraga A.-M."/>
            <person name="Chillingworth T."/>
            <person name="Cronin A."/>
            <person name="Davies R.M."/>
            <person name="Davis P."/>
            <person name="Dougan G."/>
            <person name="Feltwell T."/>
            <person name="Hamlin N."/>
            <person name="Holroyd S."/>
            <person name="Jagels K."/>
            <person name="Karlyshev A.V."/>
            <person name="Leather S."/>
            <person name="Moule S."/>
            <person name="Oyston P.C.F."/>
            <person name="Quail M.A."/>
            <person name="Rutherford K.M."/>
            <person name="Simmonds M."/>
            <person name="Skelton J."/>
            <person name="Stevens K."/>
            <person name="Whitehead S."/>
            <person name="Barrell B.G."/>
        </authorList>
    </citation>
    <scope>NUCLEOTIDE SEQUENCE [LARGE SCALE GENOMIC DNA]</scope>
    <source>
        <strain>CO-92 / Biovar Orientalis</strain>
    </source>
</reference>
<reference key="2">
    <citation type="journal article" date="2002" name="J. Bacteriol.">
        <title>Genome sequence of Yersinia pestis KIM.</title>
        <authorList>
            <person name="Deng W."/>
            <person name="Burland V."/>
            <person name="Plunkett G. III"/>
            <person name="Boutin A."/>
            <person name="Mayhew G.F."/>
            <person name="Liss P."/>
            <person name="Perna N.T."/>
            <person name="Rose D.J."/>
            <person name="Mau B."/>
            <person name="Zhou S."/>
            <person name="Schwartz D.C."/>
            <person name="Fetherston J.D."/>
            <person name="Lindler L.E."/>
            <person name="Brubaker R.R."/>
            <person name="Plano G.V."/>
            <person name="Straley S.C."/>
            <person name="McDonough K.A."/>
            <person name="Nilles M.L."/>
            <person name="Matson J.S."/>
            <person name="Blattner F.R."/>
            <person name="Perry R.D."/>
        </authorList>
    </citation>
    <scope>NUCLEOTIDE SEQUENCE [LARGE SCALE GENOMIC DNA]</scope>
    <source>
        <strain>KIM10+ / Biovar Mediaevalis</strain>
    </source>
</reference>
<reference key="3">
    <citation type="journal article" date="2004" name="DNA Res.">
        <title>Complete genome sequence of Yersinia pestis strain 91001, an isolate avirulent to humans.</title>
        <authorList>
            <person name="Song Y."/>
            <person name="Tong Z."/>
            <person name="Wang J."/>
            <person name="Wang L."/>
            <person name="Guo Z."/>
            <person name="Han Y."/>
            <person name="Zhang J."/>
            <person name="Pei D."/>
            <person name="Zhou D."/>
            <person name="Qin H."/>
            <person name="Pang X."/>
            <person name="Han Y."/>
            <person name="Zhai J."/>
            <person name="Li M."/>
            <person name="Cui B."/>
            <person name="Qi Z."/>
            <person name="Jin L."/>
            <person name="Dai R."/>
            <person name="Chen F."/>
            <person name="Li S."/>
            <person name="Ye C."/>
            <person name="Du Z."/>
            <person name="Lin W."/>
            <person name="Wang J."/>
            <person name="Yu J."/>
            <person name="Yang H."/>
            <person name="Wang J."/>
            <person name="Huang P."/>
            <person name="Yang R."/>
        </authorList>
    </citation>
    <scope>NUCLEOTIDE SEQUENCE [LARGE SCALE GENOMIC DNA]</scope>
    <source>
        <strain>91001 / Biovar Mediaevalis</strain>
    </source>
</reference>
<sequence>MPKRTYAMRYVAGQPVEQIFPGAAKQLDKGLPLGEPLPTAELLRVVVWNIFKQQRAGWLPVLKELGRDTQLMLLQEAQTTPELVRFATASYQAADQVPAFSLPQHPSGVMTLAAAHPVYCCPLREREPLLRLSKSALVTVYPIHDGRLLMVVNIHAVNFSLGVDVYSKQLDPIGDQIASHRGPVILAGDFNAWSRQRINALQHFAQDAGLQEVEFRVDHRSRAFGRPLDFIFYRGLTVIDASVLVTRASDHNPLIVEFQP</sequence>
<name>Y1077_YERPE</name>
<gene>
    <name type="ordered locus">YPO1077</name>
    <name type="ordered locus">y3099</name>
    <name type="ordered locus">YP_2772</name>
</gene>
<organism>
    <name type="scientific">Yersinia pestis</name>
    <dbReference type="NCBI Taxonomy" id="632"/>
    <lineage>
        <taxon>Bacteria</taxon>
        <taxon>Pseudomonadati</taxon>
        <taxon>Pseudomonadota</taxon>
        <taxon>Gammaproteobacteria</taxon>
        <taxon>Enterobacterales</taxon>
        <taxon>Yersiniaceae</taxon>
        <taxon>Yersinia</taxon>
    </lineage>
</organism>
<proteinExistence type="inferred from homology"/>
<keyword id="KW-0963">Cytoplasm</keyword>
<keyword id="KW-1185">Reference proteome</keyword>
<dbReference type="EMBL" id="AL590842">
    <property type="protein sequence ID" value="CAL19743.1"/>
    <property type="molecule type" value="Genomic_DNA"/>
</dbReference>
<dbReference type="EMBL" id="AE009952">
    <property type="protein sequence ID" value="AAM86649.1"/>
    <property type="molecule type" value="Genomic_DNA"/>
</dbReference>
<dbReference type="EMBL" id="AE017042">
    <property type="protein sequence ID" value="AAS62956.1"/>
    <property type="molecule type" value="Genomic_DNA"/>
</dbReference>
<dbReference type="PIR" id="AE0132">
    <property type="entry name" value="AE0132"/>
</dbReference>
<dbReference type="RefSeq" id="WP_002220059.1">
    <property type="nucleotide sequence ID" value="NZ_WUCM01000115.1"/>
</dbReference>
<dbReference type="RefSeq" id="YP_002346121.1">
    <property type="nucleotide sequence ID" value="NC_003143.1"/>
</dbReference>
<dbReference type="SMR" id="Q8ZH34"/>
<dbReference type="STRING" id="214092.YPO1077"/>
<dbReference type="PaxDb" id="214092-YPO1077"/>
<dbReference type="DNASU" id="1148046"/>
<dbReference type="EnsemblBacteria" id="AAS62956">
    <property type="protein sequence ID" value="AAS62956"/>
    <property type="gene ID" value="YP_2772"/>
</dbReference>
<dbReference type="KEGG" id="ype:YPO1077"/>
<dbReference type="KEGG" id="ypk:y3099"/>
<dbReference type="KEGG" id="ypm:YP_2772"/>
<dbReference type="PATRIC" id="fig|214092.21.peg.1368"/>
<dbReference type="eggNOG" id="COG3021">
    <property type="taxonomic scope" value="Bacteria"/>
</dbReference>
<dbReference type="HOGENOM" id="CLU_083563_0_0_6"/>
<dbReference type="OMA" id="HAINFSF"/>
<dbReference type="OrthoDB" id="9793162at2"/>
<dbReference type="Proteomes" id="UP000000815">
    <property type="component" value="Chromosome"/>
</dbReference>
<dbReference type="Proteomes" id="UP000001019">
    <property type="component" value="Chromosome"/>
</dbReference>
<dbReference type="Proteomes" id="UP000002490">
    <property type="component" value="Chromosome"/>
</dbReference>
<dbReference type="GO" id="GO:0005737">
    <property type="term" value="C:cytoplasm"/>
    <property type="evidence" value="ECO:0007669"/>
    <property type="project" value="UniProtKB-SubCell"/>
</dbReference>
<dbReference type="GO" id="GO:0003824">
    <property type="term" value="F:catalytic activity"/>
    <property type="evidence" value="ECO:0007669"/>
    <property type="project" value="InterPro"/>
</dbReference>
<dbReference type="Gene3D" id="3.60.10.10">
    <property type="entry name" value="Endonuclease/exonuclease/phosphatase"/>
    <property type="match status" value="1"/>
</dbReference>
<dbReference type="HAMAP" id="MF_01119">
    <property type="entry name" value="UPF0294"/>
    <property type="match status" value="1"/>
</dbReference>
<dbReference type="InterPro" id="IPR036691">
    <property type="entry name" value="Endo/exonu/phosph_ase_sf"/>
</dbReference>
<dbReference type="InterPro" id="IPR005135">
    <property type="entry name" value="Endo/exonuclease/phosphatase"/>
</dbReference>
<dbReference type="InterPro" id="IPR022958">
    <property type="entry name" value="UPF0294"/>
</dbReference>
<dbReference type="NCBIfam" id="NF003839">
    <property type="entry name" value="PRK05421.1-1"/>
    <property type="match status" value="1"/>
</dbReference>
<dbReference type="NCBIfam" id="NF003840">
    <property type="entry name" value="PRK05421.1-2"/>
    <property type="match status" value="1"/>
</dbReference>
<dbReference type="NCBIfam" id="NF003841">
    <property type="entry name" value="PRK05421.1-3"/>
    <property type="match status" value="1"/>
</dbReference>
<dbReference type="NCBIfam" id="NF003842">
    <property type="entry name" value="PRK05421.1-4"/>
    <property type="match status" value="1"/>
</dbReference>
<dbReference type="Pfam" id="PF03372">
    <property type="entry name" value="Exo_endo_phos"/>
    <property type="match status" value="1"/>
</dbReference>
<dbReference type="SUPFAM" id="SSF56219">
    <property type="entry name" value="DNase I-like"/>
    <property type="match status" value="1"/>
</dbReference>
<comment type="subcellular location">
    <subcellularLocation>
        <location evidence="1">Cytoplasm</location>
    </subcellularLocation>
</comment>
<comment type="similarity">
    <text evidence="1">Belongs to the UPF0294 family.</text>
</comment>
<feature type="chain" id="PRO_0000074648" description="UPF0294 protein YPO1077/y3099/YP_2772">
    <location>
        <begin position="1"/>
        <end position="260"/>
    </location>
</feature>
<protein>
    <recommendedName>
        <fullName evidence="1">UPF0294 protein YPO1077/y3099/YP_2772</fullName>
    </recommendedName>
</protein>